<evidence type="ECO:0000250" key="1"/>
<evidence type="ECO:0000255" key="2"/>
<evidence type="ECO:0000256" key="3">
    <source>
        <dbReference type="SAM" id="MobiDB-lite"/>
    </source>
</evidence>
<evidence type="ECO:0000305" key="4"/>
<accession>Q5ZKX1</accession>
<gene>
    <name type="primary">CHMP1B</name>
    <name type="ORF">RCJMB04_8n10</name>
</gene>
<protein>
    <recommendedName>
        <fullName>Charged multivesicular body protein 1b</fullName>
    </recommendedName>
    <alternativeName>
        <fullName>Chromatin-modifying protein 1b</fullName>
        <shortName>CHMP1b</shortName>
    </alternativeName>
</protein>
<dbReference type="EMBL" id="AJ719963">
    <property type="protein sequence ID" value="CAG31622.1"/>
    <property type="molecule type" value="mRNA"/>
</dbReference>
<dbReference type="RefSeq" id="NP_001006428.1">
    <property type="nucleotide sequence ID" value="NM_001006428.1"/>
</dbReference>
<dbReference type="SMR" id="Q5ZKX1"/>
<dbReference type="FunCoup" id="Q5ZKX1">
    <property type="interactions" value="2340"/>
</dbReference>
<dbReference type="STRING" id="9031.ENSGALP00000056089"/>
<dbReference type="PaxDb" id="9031-ENSGALP00000006490"/>
<dbReference type="GeneID" id="422143"/>
<dbReference type="KEGG" id="gga:422143"/>
<dbReference type="CTD" id="57132"/>
<dbReference type="VEuPathDB" id="HostDB:geneid_422143"/>
<dbReference type="eggNOG" id="KOG3232">
    <property type="taxonomic scope" value="Eukaryota"/>
</dbReference>
<dbReference type="InParanoid" id="Q5ZKX1"/>
<dbReference type="OrthoDB" id="10266568at2759"/>
<dbReference type="PhylomeDB" id="Q5ZKX1"/>
<dbReference type="PRO" id="PR:Q5ZKX1"/>
<dbReference type="Proteomes" id="UP000000539">
    <property type="component" value="Unassembled WGS sequence"/>
</dbReference>
<dbReference type="GO" id="GO:0005829">
    <property type="term" value="C:cytosol"/>
    <property type="evidence" value="ECO:0007669"/>
    <property type="project" value="UniProtKB-SubCell"/>
</dbReference>
<dbReference type="GO" id="GO:0000815">
    <property type="term" value="C:ESCRT III complex"/>
    <property type="evidence" value="ECO:0000318"/>
    <property type="project" value="GO_Central"/>
</dbReference>
<dbReference type="GO" id="GO:0031902">
    <property type="term" value="C:late endosome membrane"/>
    <property type="evidence" value="ECO:0007669"/>
    <property type="project" value="UniProtKB-SubCell"/>
</dbReference>
<dbReference type="GO" id="GO:0005771">
    <property type="term" value="C:multivesicular body"/>
    <property type="evidence" value="ECO:0000318"/>
    <property type="project" value="GO_Central"/>
</dbReference>
<dbReference type="GO" id="GO:0032509">
    <property type="term" value="P:endosome transport via multivesicular body sorting pathway"/>
    <property type="evidence" value="ECO:0000318"/>
    <property type="project" value="GO_Central"/>
</dbReference>
<dbReference type="GO" id="GO:0045324">
    <property type="term" value="P:late endosome to vacuole transport"/>
    <property type="evidence" value="ECO:0000318"/>
    <property type="project" value="GO_Central"/>
</dbReference>
<dbReference type="GO" id="GO:0015031">
    <property type="term" value="P:protein transport"/>
    <property type="evidence" value="ECO:0000318"/>
    <property type="project" value="GO_Central"/>
</dbReference>
<dbReference type="Gene3D" id="6.10.140.1230">
    <property type="match status" value="1"/>
</dbReference>
<dbReference type="InterPro" id="IPR005024">
    <property type="entry name" value="Snf7_fam"/>
</dbReference>
<dbReference type="PANTHER" id="PTHR10476">
    <property type="entry name" value="CHARGED MULTIVESICULAR BODY PROTEIN"/>
    <property type="match status" value="1"/>
</dbReference>
<dbReference type="Pfam" id="PF03357">
    <property type="entry name" value="Snf7"/>
    <property type="match status" value="1"/>
</dbReference>
<keyword id="KW-0175">Coiled coil</keyword>
<keyword id="KW-0963">Cytoplasm</keyword>
<keyword id="KW-0967">Endosome</keyword>
<keyword id="KW-0472">Membrane</keyword>
<keyword id="KW-0653">Protein transport</keyword>
<keyword id="KW-1185">Reference proteome</keyword>
<keyword id="KW-0813">Transport</keyword>
<feature type="chain" id="PRO_0000211457" description="Charged multivesicular body protein 1b">
    <location>
        <begin position="1"/>
        <end position="199"/>
    </location>
</feature>
<feature type="region of interest" description="Disordered" evidence="3">
    <location>
        <begin position="167"/>
        <end position="199"/>
    </location>
</feature>
<feature type="coiled-coil region" evidence="2">
    <location>
        <begin position="10"/>
        <end position="48"/>
    </location>
</feature>
<feature type="coiled-coil region" evidence="2">
    <location>
        <begin position="178"/>
        <end position="199"/>
    </location>
</feature>
<feature type="short sequence motif" description="MIT-interacting motif">
    <location>
        <begin position="186"/>
        <end position="196"/>
    </location>
</feature>
<feature type="compositionally biased region" description="Polar residues" evidence="3">
    <location>
        <begin position="170"/>
        <end position="182"/>
    </location>
</feature>
<sequence length="199" mass="22233">MSNMEKHLFNLKFAAKELNRNSKRCDKEEKAEKAKIKKAIQKGNMEVARIHAENAIRQKNQAINFLRMSARVDAVAARVQTAVTMGKVTKSMAGVVKSMDATLKSMNLEKISALMDKFEHQFETLDVQTQQMENTMSNTTTLTTPQNQVDMLLQEMADEAGLDLNMELPQGQTGSVGTSVASAEQDELSQRLARLRDQV</sequence>
<comment type="function">
    <text>Probable peripherally associated component of the endosomal sorting required for transport complex III (ESCRT-III) which is involved in multivesicular bodies (MVBs) formation and sorting of endosomal cargo proteins into MVBs. MVBs contain intraluminal vesicles (ILVs) that are generated by invagination and scission from the limiting membrane of the endosome and mostly are delivered to lysosomes enabling degradation of membrane proteins, such as stimulated growth factor receptors, lysosomal enzymes and lipids.</text>
</comment>
<comment type="subunit">
    <text>Probable peripherally associated component of the endosomal sorting required for transport complex III (ESCRT-III).</text>
</comment>
<comment type="subcellular location">
    <subcellularLocation>
        <location evidence="1">Cytoplasm</location>
        <location evidence="1">Cytosol</location>
    </subcellularLocation>
    <subcellularLocation>
        <location evidence="1">Endosome</location>
    </subcellularLocation>
    <subcellularLocation>
        <location evidence="1">Late endosome membrane</location>
        <topology evidence="1">Peripheral membrane protein</topology>
    </subcellularLocation>
</comment>
<comment type="similarity">
    <text evidence="4">Belongs to the SNF7 family.</text>
</comment>
<organism>
    <name type="scientific">Gallus gallus</name>
    <name type="common">Chicken</name>
    <dbReference type="NCBI Taxonomy" id="9031"/>
    <lineage>
        <taxon>Eukaryota</taxon>
        <taxon>Metazoa</taxon>
        <taxon>Chordata</taxon>
        <taxon>Craniata</taxon>
        <taxon>Vertebrata</taxon>
        <taxon>Euteleostomi</taxon>
        <taxon>Archelosauria</taxon>
        <taxon>Archosauria</taxon>
        <taxon>Dinosauria</taxon>
        <taxon>Saurischia</taxon>
        <taxon>Theropoda</taxon>
        <taxon>Coelurosauria</taxon>
        <taxon>Aves</taxon>
        <taxon>Neognathae</taxon>
        <taxon>Galloanserae</taxon>
        <taxon>Galliformes</taxon>
        <taxon>Phasianidae</taxon>
        <taxon>Phasianinae</taxon>
        <taxon>Gallus</taxon>
    </lineage>
</organism>
<name>CHM1B_CHICK</name>
<proteinExistence type="evidence at transcript level"/>
<reference key="1">
    <citation type="journal article" date="2005" name="Genome Biol.">
        <title>Full-length cDNAs from chicken bursal lymphocytes to facilitate gene function analysis.</title>
        <authorList>
            <person name="Caldwell R.B."/>
            <person name="Kierzek A.M."/>
            <person name="Arakawa H."/>
            <person name="Bezzubov Y."/>
            <person name="Zaim J."/>
            <person name="Fiedler P."/>
            <person name="Kutter S."/>
            <person name="Blagodatski A."/>
            <person name="Kostovska D."/>
            <person name="Koter M."/>
            <person name="Plachy J."/>
            <person name="Carninci P."/>
            <person name="Hayashizaki Y."/>
            <person name="Buerstedde J.-M."/>
        </authorList>
    </citation>
    <scope>NUCLEOTIDE SEQUENCE [LARGE SCALE MRNA]</scope>
    <source>
        <strain>CB</strain>
        <tissue>Bursa of Fabricius</tissue>
    </source>
</reference>